<evidence type="ECO:0000255" key="1">
    <source>
        <dbReference type="HAMAP-Rule" id="MF_00362"/>
    </source>
</evidence>
<evidence type="ECO:0000256" key="2">
    <source>
        <dbReference type="SAM" id="MobiDB-lite"/>
    </source>
</evidence>
<evidence type="ECO:0000305" key="3"/>
<organism>
    <name type="scientific">Finegoldia magna (strain ATCC 29328 / DSM 20472 / WAL 2508)</name>
    <name type="common">Peptostreptococcus magnus</name>
    <dbReference type="NCBI Taxonomy" id="334413"/>
    <lineage>
        <taxon>Bacteria</taxon>
        <taxon>Bacillati</taxon>
        <taxon>Bacillota</taxon>
        <taxon>Tissierellia</taxon>
        <taxon>Tissierellales</taxon>
        <taxon>Peptoniphilaceae</taxon>
        <taxon>Finegoldia</taxon>
    </lineage>
</organism>
<reference key="1">
    <citation type="journal article" date="2008" name="DNA Res.">
        <title>Complete genome sequence of Finegoldia magna, an anaerobic opportunistic pathogen.</title>
        <authorList>
            <person name="Goto T."/>
            <person name="Yamashita A."/>
            <person name="Hirakawa H."/>
            <person name="Matsutani M."/>
            <person name="Todo K."/>
            <person name="Ohshima K."/>
            <person name="Toh H."/>
            <person name="Miyamoto K."/>
            <person name="Kuhara S."/>
            <person name="Hattori M."/>
            <person name="Shimizu T."/>
            <person name="Akimoto S."/>
        </authorList>
    </citation>
    <scope>NUCLEOTIDE SEQUENCE [LARGE SCALE GENOMIC DNA]</scope>
    <source>
        <strain>ATCC 29328 / DSM 20472 / WAL 2508</strain>
    </source>
</reference>
<comment type="function">
    <text evidence="1">Forms part of the ribosomal stalk, playing a central role in the interaction of the ribosome with GTP-bound translation factors.</text>
</comment>
<comment type="subunit">
    <text evidence="1">Part of the ribosomal stalk of the 50S ribosomal subunit. The N-terminus interacts with L11 and the large rRNA to form the base of the stalk. The C-terminus forms an elongated spine to which L12 dimers bind in a sequential fashion forming a multimeric L10(L12)X complex.</text>
</comment>
<comment type="similarity">
    <text evidence="1">Belongs to the universal ribosomal protein uL10 family.</text>
</comment>
<feature type="chain" id="PRO_1000120963" description="Large ribosomal subunit protein uL10">
    <location>
        <begin position="1"/>
        <end position="180"/>
    </location>
</feature>
<feature type="region of interest" description="Disordered" evidence="2">
    <location>
        <begin position="161"/>
        <end position="180"/>
    </location>
</feature>
<feature type="compositionally biased region" description="Acidic residues" evidence="2">
    <location>
        <begin position="166"/>
        <end position="180"/>
    </location>
</feature>
<sequence length="180" mass="20079">MKEHVLNQKKAVVEEIKGHINDAKSMVIVDYRGLDVSEATELREKFRNENVLFKVYKNTMMNFAFKELGFEGFLDYLSGPNAVAFSMDDPIAAARIAKEFAADHENLEIKAGYLGDKFLDVEGVKKIASIPSREVLLTKMLGSFKAPVSKFVYLADAIAKSKAEGSEETESNETTETVEE</sequence>
<dbReference type="EMBL" id="AP008971">
    <property type="protein sequence ID" value="BAG07960.1"/>
    <property type="molecule type" value="Genomic_DNA"/>
</dbReference>
<dbReference type="RefSeq" id="WP_002838611.1">
    <property type="nucleotide sequence ID" value="NC_010376.1"/>
</dbReference>
<dbReference type="SMR" id="B0S064"/>
<dbReference type="STRING" id="334413.FMG_0542"/>
<dbReference type="KEGG" id="fma:FMG_0542"/>
<dbReference type="eggNOG" id="COG0244">
    <property type="taxonomic scope" value="Bacteria"/>
</dbReference>
<dbReference type="HOGENOM" id="CLU_092227_2_0_9"/>
<dbReference type="Proteomes" id="UP000001319">
    <property type="component" value="Chromosome"/>
</dbReference>
<dbReference type="GO" id="GO:0015934">
    <property type="term" value="C:large ribosomal subunit"/>
    <property type="evidence" value="ECO:0007669"/>
    <property type="project" value="InterPro"/>
</dbReference>
<dbReference type="GO" id="GO:0070180">
    <property type="term" value="F:large ribosomal subunit rRNA binding"/>
    <property type="evidence" value="ECO:0007669"/>
    <property type="project" value="UniProtKB-UniRule"/>
</dbReference>
<dbReference type="GO" id="GO:0003735">
    <property type="term" value="F:structural constituent of ribosome"/>
    <property type="evidence" value="ECO:0007669"/>
    <property type="project" value="InterPro"/>
</dbReference>
<dbReference type="GO" id="GO:0006412">
    <property type="term" value="P:translation"/>
    <property type="evidence" value="ECO:0007669"/>
    <property type="project" value="UniProtKB-UniRule"/>
</dbReference>
<dbReference type="CDD" id="cd05797">
    <property type="entry name" value="Ribosomal_L10"/>
    <property type="match status" value="1"/>
</dbReference>
<dbReference type="Gene3D" id="3.30.70.1730">
    <property type="match status" value="1"/>
</dbReference>
<dbReference type="Gene3D" id="6.10.250.290">
    <property type="match status" value="1"/>
</dbReference>
<dbReference type="HAMAP" id="MF_00362">
    <property type="entry name" value="Ribosomal_uL10"/>
    <property type="match status" value="1"/>
</dbReference>
<dbReference type="InterPro" id="IPR001790">
    <property type="entry name" value="Ribosomal_uL10"/>
</dbReference>
<dbReference type="InterPro" id="IPR043141">
    <property type="entry name" value="Ribosomal_uL10-like_sf"/>
</dbReference>
<dbReference type="InterPro" id="IPR022973">
    <property type="entry name" value="Ribosomal_uL10_bac"/>
</dbReference>
<dbReference type="InterPro" id="IPR047865">
    <property type="entry name" value="Ribosomal_uL10_bac_type"/>
</dbReference>
<dbReference type="InterPro" id="IPR002363">
    <property type="entry name" value="Ribosomal_uL10_CS_bac"/>
</dbReference>
<dbReference type="NCBIfam" id="NF000955">
    <property type="entry name" value="PRK00099.1-1"/>
    <property type="match status" value="1"/>
</dbReference>
<dbReference type="PANTHER" id="PTHR11560">
    <property type="entry name" value="39S RIBOSOMAL PROTEIN L10, MITOCHONDRIAL"/>
    <property type="match status" value="1"/>
</dbReference>
<dbReference type="Pfam" id="PF00466">
    <property type="entry name" value="Ribosomal_L10"/>
    <property type="match status" value="1"/>
</dbReference>
<dbReference type="SUPFAM" id="SSF160369">
    <property type="entry name" value="Ribosomal protein L10-like"/>
    <property type="match status" value="1"/>
</dbReference>
<dbReference type="PROSITE" id="PS01109">
    <property type="entry name" value="RIBOSOMAL_L10"/>
    <property type="match status" value="1"/>
</dbReference>
<gene>
    <name evidence="1" type="primary">rplJ</name>
    <name type="ordered locus">FMG_0542</name>
</gene>
<name>RL10_FINM2</name>
<keyword id="KW-1185">Reference proteome</keyword>
<keyword id="KW-0687">Ribonucleoprotein</keyword>
<keyword id="KW-0689">Ribosomal protein</keyword>
<keyword id="KW-0694">RNA-binding</keyword>
<keyword id="KW-0699">rRNA-binding</keyword>
<protein>
    <recommendedName>
        <fullName evidence="1">Large ribosomal subunit protein uL10</fullName>
    </recommendedName>
    <alternativeName>
        <fullName evidence="3">50S ribosomal protein L10</fullName>
    </alternativeName>
</protein>
<accession>B0S064</accession>
<proteinExistence type="inferred from homology"/>